<proteinExistence type="inferred from homology"/>
<name>DEOD_LEVBA</name>
<organism>
    <name type="scientific">Levilactobacillus brevis (strain ATCC 367 / BCRC 12310 / CIP 105137 / JCM 1170 / LMG 11437 / NCIMB 947 / NCTC 947)</name>
    <name type="common">Lactobacillus brevis</name>
    <dbReference type="NCBI Taxonomy" id="387344"/>
    <lineage>
        <taxon>Bacteria</taxon>
        <taxon>Bacillati</taxon>
        <taxon>Bacillota</taxon>
        <taxon>Bacilli</taxon>
        <taxon>Lactobacillales</taxon>
        <taxon>Lactobacillaceae</taxon>
        <taxon>Levilactobacillus</taxon>
    </lineage>
</organism>
<dbReference type="EC" id="2.4.2.1" evidence="2"/>
<dbReference type="EMBL" id="CP000416">
    <property type="protein sequence ID" value="ABJ64670.1"/>
    <property type="molecule type" value="Genomic_DNA"/>
</dbReference>
<dbReference type="RefSeq" id="WP_011668296.1">
    <property type="nucleotide sequence ID" value="NC_008497.1"/>
</dbReference>
<dbReference type="SMR" id="Q03Q52"/>
<dbReference type="STRING" id="387344.LVIS_1593"/>
<dbReference type="KEGG" id="lbr:LVIS_1593"/>
<dbReference type="eggNOG" id="COG0813">
    <property type="taxonomic scope" value="Bacteria"/>
</dbReference>
<dbReference type="HOGENOM" id="CLU_068457_2_0_9"/>
<dbReference type="Proteomes" id="UP000001652">
    <property type="component" value="Chromosome"/>
</dbReference>
<dbReference type="GO" id="GO:0005829">
    <property type="term" value="C:cytosol"/>
    <property type="evidence" value="ECO:0007669"/>
    <property type="project" value="TreeGrafter"/>
</dbReference>
<dbReference type="GO" id="GO:0004731">
    <property type="term" value="F:purine-nucleoside phosphorylase activity"/>
    <property type="evidence" value="ECO:0007669"/>
    <property type="project" value="UniProtKB-UniRule"/>
</dbReference>
<dbReference type="GO" id="GO:0006152">
    <property type="term" value="P:purine nucleoside catabolic process"/>
    <property type="evidence" value="ECO:0007669"/>
    <property type="project" value="TreeGrafter"/>
</dbReference>
<dbReference type="CDD" id="cd09006">
    <property type="entry name" value="PNP_EcPNPI-like"/>
    <property type="match status" value="1"/>
</dbReference>
<dbReference type="Gene3D" id="3.40.50.1580">
    <property type="entry name" value="Nucleoside phosphorylase domain"/>
    <property type="match status" value="1"/>
</dbReference>
<dbReference type="HAMAP" id="MF_01627">
    <property type="entry name" value="Pur_nucleosid_phosp"/>
    <property type="match status" value="1"/>
</dbReference>
<dbReference type="InterPro" id="IPR004402">
    <property type="entry name" value="DeoD-type"/>
</dbReference>
<dbReference type="InterPro" id="IPR018016">
    <property type="entry name" value="Nucleoside_phosphorylase_CS"/>
</dbReference>
<dbReference type="InterPro" id="IPR000845">
    <property type="entry name" value="Nucleoside_phosphorylase_d"/>
</dbReference>
<dbReference type="InterPro" id="IPR035994">
    <property type="entry name" value="Nucleoside_phosphorylase_sf"/>
</dbReference>
<dbReference type="NCBIfam" id="TIGR00107">
    <property type="entry name" value="deoD"/>
    <property type="match status" value="1"/>
</dbReference>
<dbReference type="NCBIfam" id="NF004489">
    <property type="entry name" value="PRK05819.1"/>
    <property type="match status" value="1"/>
</dbReference>
<dbReference type="PANTHER" id="PTHR43691:SF11">
    <property type="entry name" value="FI09636P-RELATED"/>
    <property type="match status" value="1"/>
</dbReference>
<dbReference type="PANTHER" id="PTHR43691">
    <property type="entry name" value="URIDINE PHOSPHORYLASE"/>
    <property type="match status" value="1"/>
</dbReference>
<dbReference type="Pfam" id="PF01048">
    <property type="entry name" value="PNP_UDP_1"/>
    <property type="match status" value="1"/>
</dbReference>
<dbReference type="SUPFAM" id="SSF53167">
    <property type="entry name" value="Purine and uridine phosphorylases"/>
    <property type="match status" value="1"/>
</dbReference>
<dbReference type="PROSITE" id="PS01232">
    <property type="entry name" value="PNP_UDP_1"/>
    <property type="match status" value="1"/>
</dbReference>
<keyword id="KW-0328">Glycosyltransferase</keyword>
<keyword id="KW-1185">Reference proteome</keyword>
<keyword id="KW-0808">Transferase</keyword>
<feature type="chain" id="PRO_1000186205" description="Purine nucleoside phosphorylase DeoD-type">
    <location>
        <begin position="1"/>
        <end position="235"/>
    </location>
</feature>
<feature type="binding site" evidence="1">
    <location>
        <position position="4"/>
    </location>
    <ligand>
        <name>a purine D-ribonucleoside</name>
        <dbReference type="ChEBI" id="CHEBI:142355"/>
        <note>ligand shared between dimeric partners</note>
    </ligand>
</feature>
<feature type="binding site" description="in other chain" evidence="1">
    <location>
        <position position="20"/>
    </location>
    <ligand>
        <name>phosphate</name>
        <dbReference type="ChEBI" id="CHEBI:43474"/>
        <note>ligand shared between dimeric partners</note>
    </ligand>
</feature>
<feature type="binding site" description="in other chain" evidence="1">
    <location>
        <position position="24"/>
    </location>
    <ligand>
        <name>phosphate</name>
        <dbReference type="ChEBI" id="CHEBI:43474"/>
        <note>ligand shared between dimeric partners</note>
    </ligand>
</feature>
<feature type="binding site" evidence="1">
    <location>
        <position position="43"/>
    </location>
    <ligand>
        <name>phosphate</name>
        <dbReference type="ChEBI" id="CHEBI:43474"/>
        <note>ligand shared between dimeric partners</note>
    </ligand>
</feature>
<feature type="binding site" description="in other chain" evidence="1">
    <location>
        <begin position="87"/>
        <end position="90"/>
    </location>
    <ligand>
        <name>phosphate</name>
        <dbReference type="ChEBI" id="CHEBI:43474"/>
        <note>ligand shared between dimeric partners</note>
    </ligand>
</feature>
<feature type="binding site" description="in other chain" evidence="1">
    <location>
        <begin position="179"/>
        <end position="181"/>
    </location>
    <ligand>
        <name>a purine D-ribonucleoside</name>
        <dbReference type="ChEBI" id="CHEBI:142355"/>
        <note>ligand shared between dimeric partners</note>
    </ligand>
</feature>
<feature type="binding site" description="in other chain" evidence="1">
    <location>
        <begin position="203"/>
        <end position="204"/>
    </location>
    <ligand>
        <name>a purine D-ribonucleoside</name>
        <dbReference type="ChEBI" id="CHEBI:142355"/>
        <note>ligand shared between dimeric partners</note>
    </ligand>
</feature>
<feature type="site" description="Important for catalytic activity" evidence="2">
    <location>
        <position position="217"/>
    </location>
</feature>
<reference key="1">
    <citation type="journal article" date="2006" name="Proc. Natl. Acad. Sci. U.S.A.">
        <title>Comparative genomics of the lactic acid bacteria.</title>
        <authorList>
            <person name="Makarova K.S."/>
            <person name="Slesarev A."/>
            <person name="Wolf Y.I."/>
            <person name="Sorokin A."/>
            <person name="Mirkin B."/>
            <person name="Koonin E.V."/>
            <person name="Pavlov A."/>
            <person name="Pavlova N."/>
            <person name="Karamychev V."/>
            <person name="Polouchine N."/>
            <person name="Shakhova V."/>
            <person name="Grigoriev I."/>
            <person name="Lou Y."/>
            <person name="Rohksar D."/>
            <person name="Lucas S."/>
            <person name="Huang K."/>
            <person name="Goodstein D.M."/>
            <person name="Hawkins T."/>
            <person name="Plengvidhya V."/>
            <person name="Welker D."/>
            <person name="Hughes J."/>
            <person name="Goh Y."/>
            <person name="Benson A."/>
            <person name="Baldwin K."/>
            <person name="Lee J.-H."/>
            <person name="Diaz-Muniz I."/>
            <person name="Dosti B."/>
            <person name="Smeianov V."/>
            <person name="Wechter W."/>
            <person name="Barabote R."/>
            <person name="Lorca G."/>
            <person name="Altermann E."/>
            <person name="Barrangou R."/>
            <person name="Ganesan B."/>
            <person name="Xie Y."/>
            <person name="Rawsthorne H."/>
            <person name="Tamir D."/>
            <person name="Parker C."/>
            <person name="Breidt F."/>
            <person name="Broadbent J.R."/>
            <person name="Hutkins R."/>
            <person name="O'Sullivan D."/>
            <person name="Steele J."/>
            <person name="Unlu G."/>
            <person name="Saier M.H. Jr."/>
            <person name="Klaenhammer T."/>
            <person name="Richardson P."/>
            <person name="Kozyavkin S."/>
            <person name="Weimer B.C."/>
            <person name="Mills D.A."/>
        </authorList>
    </citation>
    <scope>NUCLEOTIDE SEQUENCE [LARGE SCALE GENOMIC DNA]</scope>
    <source>
        <strain>ATCC 367 / BCRC 12310 / CIP 105137 / JCM 1170 / LMG 11437 / NCIMB 947 / NCTC 947</strain>
    </source>
</reference>
<sequence>MSNHLEAKMGDIADTVLLPGDPLRAKYIAETFLENPVCYNTVRNAFGYTGTYKGKRISVQGTGMGIPSISIYTNELISEYGVKTLFRVGTSGGMSPDVHVRDVVLAQAASTDSSIIHNTFGGGIYYAAISDFGLLDTAYHVAQDLKISVRVGNVLAEDRFYNDEMDRQKLVDYGVIATEMESTALFMLAAKYHVRALSVLTISNHLMTGESTTPEEREKSFNDMIRVALDTAAKA</sequence>
<gene>
    <name evidence="2" type="primary">deoD</name>
    <name type="ordered locus">LVIS_1593</name>
</gene>
<evidence type="ECO:0000250" key="1">
    <source>
        <dbReference type="UniProtKB" id="P50389"/>
    </source>
</evidence>
<evidence type="ECO:0000255" key="2">
    <source>
        <dbReference type="HAMAP-Rule" id="MF_01627"/>
    </source>
</evidence>
<protein>
    <recommendedName>
        <fullName evidence="2">Purine nucleoside phosphorylase DeoD-type</fullName>
        <shortName evidence="2">PNP</shortName>
        <ecNumber evidence="2">2.4.2.1</ecNumber>
    </recommendedName>
</protein>
<accession>Q03Q52</accession>
<comment type="function">
    <text evidence="2">Catalyzes the reversible phosphorolytic breakdown of the N-glycosidic bond in the beta-(deoxy)ribonucleoside molecules, with the formation of the corresponding free purine bases and pentose-1-phosphate.</text>
</comment>
<comment type="catalytic activity">
    <reaction evidence="2">
        <text>a purine D-ribonucleoside + phosphate = a purine nucleobase + alpha-D-ribose 1-phosphate</text>
        <dbReference type="Rhea" id="RHEA:19805"/>
        <dbReference type="ChEBI" id="CHEBI:26386"/>
        <dbReference type="ChEBI" id="CHEBI:43474"/>
        <dbReference type="ChEBI" id="CHEBI:57720"/>
        <dbReference type="ChEBI" id="CHEBI:142355"/>
        <dbReference type="EC" id="2.4.2.1"/>
    </reaction>
</comment>
<comment type="catalytic activity">
    <reaction evidence="2">
        <text>a purine 2'-deoxy-D-ribonucleoside + phosphate = a purine nucleobase + 2-deoxy-alpha-D-ribose 1-phosphate</text>
        <dbReference type="Rhea" id="RHEA:36431"/>
        <dbReference type="ChEBI" id="CHEBI:26386"/>
        <dbReference type="ChEBI" id="CHEBI:43474"/>
        <dbReference type="ChEBI" id="CHEBI:57259"/>
        <dbReference type="ChEBI" id="CHEBI:142361"/>
        <dbReference type="EC" id="2.4.2.1"/>
    </reaction>
</comment>
<comment type="subunit">
    <text evidence="2">Homohexamer; trimer of homodimers.</text>
</comment>
<comment type="similarity">
    <text evidence="2">Belongs to the PNP/UDP phosphorylase family.</text>
</comment>